<protein>
    <recommendedName>
        <fullName evidence="1">Large ribosomal subunit protein uL18</fullName>
    </recommendedName>
    <alternativeName>
        <fullName evidence="3">50S ribosomal protein L18</fullName>
    </alternativeName>
</protein>
<reference key="1">
    <citation type="journal article" date="2008" name="J. Bacteriol.">
        <title>Complete genome sequence of the mosquitocidal bacterium Bacillus sphaericus C3-41 and comparison with those of closely related Bacillus species.</title>
        <authorList>
            <person name="Hu X."/>
            <person name="Fan W."/>
            <person name="Han B."/>
            <person name="Liu H."/>
            <person name="Zheng D."/>
            <person name="Li Q."/>
            <person name="Dong W."/>
            <person name="Yan J."/>
            <person name="Gao M."/>
            <person name="Berry C."/>
            <person name="Yuan Z."/>
        </authorList>
    </citation>
    <scope>NUCLEOTIDE SEQUENCE [LARGE SCALE GENOMIC DNA]</scope>
    <source>
        <strain>C3-41</strain>
    </source>
</reference>
<keyword id="KW-0687">Ribonucleoprotein</keyword>
<keyword id="KW-0689">Ribosomal protein</keyword>
<keyword id="KW-0694">RNA-binding</keyword>
<keyword id="KW-0699">rRNA-binding</keyword>
<name>RL18_LYSSC</name>
<accession>B1HMW4</accession>
<comment type="function">
    <text evidence="1">This is one of the proteins that bind and probably mediate the attachment of the 5S RNA into the large ribosomal subunit, where it forms part of the central protuberance.</text>
</comment>
<comment type="subunit">
    <text evidence="1">Part of the 50S ribosomal subunit; part of the 5S rRNA/L5/L18/L25 subcomplex. Contacts the 5S and 23S rRNAs.</text>
</comment>
<comment type="similarity">
    <text evidence="1">Belongs to the universal ribosomal protein uL18 family.</text>
</comment>
<proteinExistence type="inferred from homology"/>
<gene>
    <name evidence="1" type="primary">rplR</name>
    <name type="ordered locus">Bsph_4598</name>
</gene>
<organism>
    <name type="scientific">Lysinibacillus sphaericus (strain C3-41)</name>
    <dbReference type="NCBI Taxonomy" id="444177"/>
    <lineage>
        <taxon>Bacteria</taxon>
        <taxon>Bacillati</taxon>
        <taxon>Bacillota</taxon>
        <taxon>Bacilli</taxon>
        <taxon>Bacillales</taxon>
        <taxon>Bacillaceae</taxon>
        <taxon>Lysinibacillus</taxon>
    </lineage>
</organism>
<sequence>MITKQDKNQVRKKRHARVRSKISGTAERPRLNVFRSNKNIYAQLIDDVAGVTIVSASSQENGFEGAGSNVEAASKIGETIAKRAAEKNITAVVFDRGGYLYHGRVKALAEAARENGLEF</sequence>
<evidence type="ECO:0000255" key="1">
    <source>
        <dbReference type="HAMAP-Rule" id="MF_01337"/>
    </source>
</evidence>
<evidence type="ECO:0000256" key="2">
    <source>
        <dbReference type="SAM" id="MobiDB-lite"/>
    </source>
</evidence>
<evidence type="ECO:0000305" key="3"/>
<feature type="chain" id="PRO_1000142686" description="Large ribosomal subunit protein uL18">
    <location>
        <begin position="1"/>
        <end position="119"/>
    </location>
</feature>
<feature type="region of interest" description="Disordered" evidence="2">
    <location>
        <begin position="1"/>
        <end position="24"/>
    </location>
</feature>
<feature type="compositionally biased region" description="Basic residues" evidence="2">
    <location>
        <begin position="10"/>
        <end position="20"/>
    </location>
</feature>
<dbReference type="EMBL" id="CP000817">
    <property type="protein sequence ID" value="ACA42042.1"/>
    <property type="molecule type" value="Genomic_DNA"/>
</dbReference>
<dbReference type="RefSeq" id="WP_012296055.1">
    <property type="nucleotide sequence ID" value="NC_010382.1"/>
</dbReference>
<dbReference type="SMR" id="B1HMW4"/>
<dbReference type="EnsemblBacteria" id="ACA42042">
    <property type="protein sequence ID" value="ACA42042"/>
    <property type="gene ID" value="Bsph_4598"/>
</dbReference>
<dbReference type="KEGG" id="lsp:Bsph_4598"/>
<dbReference type="HOGENOM" id="CLU_098841_0_1_9"/>
<dbReference type="Proteomes" id="UP000002164">
    <property type="component" value="Chromosome"/>
</dbReference>
<dbReference type="GO" id="GO:0022625">
    <property type="term" value="C:cytosolic large ribosomal subunit"/>
    <property type="evidence" value="ECO:0007669"/>
    <property type="project" value="TreeGrafter"/>
</dbReference>
<dbReference type="GO" id="GO:0008097">
    <property type="term" value="F:5S rRNA binding"/>
    <property type="evidence" value="ECO:0007669"/>
    <property type="project" value="TreeGrafter"/>
</dbReference>
<dbReference type="GO" id="GO:0003735">
    <property type="term" value="F:structural constituent of ribosome"/>
    <property type="evidence" value="ECO:0007669"/>
    <property type="project" value="InterPro"/>
</dbReference>
<dbReference type="GO" id="GO:0006412">
    <property type="term" value="P:translation"/>
    <property type="evidence" value="ECO:0007669"/>
    <property type="project" value="UniProtKB-UniRule"/>
</dbReference>
<dbReference type="CDD" id="cd00432">
    <property type="entry name" value="Ribosomal_L18_L5e"/>
    <property type="match status" value="1"/>
</dbReference>
<dbReference type="FunFam" id="3.30.420.100:FF:000001">
    <property type="entry name" value="50S ribosomal protein L18"/>
    <property type="match status" value="1"/>
</dbReference>
<dbReference type="Gene3D" id="3.30.420.100">
    <property type="match status" value="1"/>
</dbReference>
<dbReference type="HAMAP" id="MF_01337_B">
    <property type="entry name" value="Ribosomal_uL18_B"/>
    <property type="match status" value="1"/>
</dbReference>
<dbReference type="InterPro" id="IPR004389">
    <property type="entry name" value="Ribosomal_uL18_bac-type"/>
</dbReference>
<dbReference type="InterPro" id="IPR005484">
    <property type="entry name" value="Ribosomal_uL18_bac/euk"/>
</dbReference>
<dbReference type="NCBIfam" id="TIGR00060">
    <property type="entry name" value="L18_bact"/>
    <property type="match status" value="1"/>
</dbReference>
<dbReference type="PANTHER" id="PTHR12899">
    <property type="entry name" value="39S RIBOSOMAL PROTEIN L18, MITOCHONDRIAL"/>
    <property type="match status" value="1"/>
</dbReference>
<dbReference type="PANTHER" id="PTHR12899:SF3">
    <property type="entry name" value="LARGE RIBOSOMAL SUBUNIT PROTEIN UL18M"/>
    <property type="match status" value="1"/>
</dbReference>
<dbReference type="Pfam" id="PF00861">
    <property type="entry name" value="Ribosomal_L18p"/>
    <property type="match status" value="1"/>
</dbReference>
<dbReference type="SUPFAM" id="SSF53137">
    <property type="entry name" value="Translational machinery components"/>
    <property type="match status" value="1"/>
</dbReference>